<protein>
    <recommendedName>
        <fullName>ABC transporter G family member 13</fullName>
        <shortName>ABC transporter ABCG.13</shortName>
        <shortName>AtABCG13</shortName>
    </recommendedName>
    <alternativeName>
        <fullName>White-brown complex homolog protein 13</fullName>
        <shortName>AtWBC13</shortName>
    </alternativeName>
</protein>
<feature type="chain" id="PRO_0000240685" description="ABC transporter G family member 13">
    <location>
        <begin position="1"/>
        <end position="678"/>
    </location>
</feature>
<feature type="transmembrane region" description="Helical" evidence="3">
    <location>
        <begin position="374"/>
        <end position="394"/>
    </location>
</feature>
<feature type="transmembrane region" description="Helical" evidence="3">
    <location>
        <begin position="409"/>
        <end position="429"/>
    </location>
</feature>
<feature type="transmembrane region" description="Helical" evidence="3">
    <location>
        <begin position="446"/>
        <end position="466"/>
    </location>
</feature>
<feature type="transmembrane region" description="Helical" evidence="3">
    <location>
        <begin position="490"/>
        <end position="510"/>
    </location>
</feature>
<feature type="transmembrane region" description="Helical" evidence="3">
    <location>
        <begin position="513"/>
        <end position="533"/>
    </location>
</feature>
<feature type="transmembrane region" description="Helical" evidence="3">
    <location>
        <begin position="602"/>
        <end position="622"/>
    </location>
</feature>
<feature type="domain" description="ABC transporter" evidence="4">
    <location>
        <begin position="10"/>
        <end position="254"/>
    </location>
</feature>
<feature type="domain" description="ABC transmembrane type-2">
    <location>
        <begin position="355"/>
        <end position="567"/>
    </location>
</feature>
<feature type="binding site" evidence="4">
    <location>
        <begin position="48"/>
        <end position="55"/>
    </location>
    <ligand>
        <name>ATP</name>
        <dbReference type="ChEBI" id="CHEBI:30616"/>
    </ligand>
</feature>
<feature type="modified residue" description="Phosphoserine" evidence="2">
    <location>
        <position position="658"/>
    </location>
</feature>
<feature type="sequence conflict" description="In Ref. 3; BAC43047." evidence="6" ref="3">
    <original>E</original>
    <variation>K</variation>
    <location>
        <position position="13"/>
    </location>
</feature>
<comment type="subcellular location">
    <subcellularLocation>
        <location evidence="1">Membrane</location>
        <topology evidence="1">Multi-pass membrane protein</topology>
    </subcellularLocation>
</comment>
<comment type="induction">
    <text evidence="5">By NaCl.</text>
</comment>
<comment type="similarity">
    <text evidence="6">Belongs to the ABC transporter superfamily. ABCG family. Eye pigment precursor importer (TC 3.A.1.204) subfamily.</text>
</comment>
<proteinExistence type="evidence at transcript level"/>
<accession>Q9C8J8</accession>
<accession>Q8GX48</accession>
<sequence length="678" mass="75220">MTTPEGAMYVAWEDLTVVIPNFGEGATKRLLNGVNGCGEPNRILAIMGPSGSGKSTLLDALAGRLAGNVVMSGKVLVNGKKRRLDFGAAAYVTQEDVLLGTLTVRESISYSAHLRLPSKLTREEISDIVEATITDMGLEECSDRTIGNWHLRGISGGEKKRLSIALEVLTKPSLLFLDEPTSGLDSASAFFVVQILRNIASSGKTVVSSIHQPSGEVFALFDDLLLLSGGETVYFGEAESATKFFGEAGFPCPSRRNPSDHFLRCVNSDFDNVTAALVESRRINDSSFSLHQLHETTNTLDPLDDIPTAEIRTTLVRKFKCSLYAAASRARIQEIASIVGIVTERKKGSQTNWWKQLRILTQRSFINMSRDLGYYWMRIAVYIVLSICVGSIFFNVGRNHTNVMSTAACGGFMAGFMTFMSIGGFQSFIEEMKVFSRERLNGHYGVAVYTVSNLLSSLPFIILMCLSTSSITIYMVRFQSGGSHFFYNCLDLICAITTVESCMMMIASVVPNFLMGVMLGAGYIGIMVLSAGFFRFFPDLPMVFWRYPVSYINYGAWALQGAYKNEMIGVEYDSPLPLVPKMKGELILQTVLGINPESSKWLDLAVVMMILIGYRIAFFAILKFREKVFPVIHMLYTKRTLSHIQKRPSFRRMTPFPSRRYPVHHALSSQEGLNSPLH</sequence>
<keyword id="KW-0067">ATP-binding</keyword>
<keyword id="KW-0472">Membrane</keyword>
<keyword id="KW-0547">Nucleotide-binding</keyword>
<keyword id="KW-0597">Phosphoprotein</keyword>
<keyword id="KW-1185">Reference proteome</keyword>
<keyword id="KW-0812">Transmembrane</keyword>
<keyword id="KW-1133">Transmembrane helix</keyword>
<keyword id="KW-0813">Transport</keyword>
<gene>
    <name type="primary">ABCG13</name>
    <name type="synonym">WBC13</name>
    <name type="ordered locus">At1g51460</name>
    <name type="ORF">F5D21.8</name>
</gene>
<organism>
    <name type="scientific">Arabidopsis thaliana</name>
    <name type="common">Mouse-ear cress</name>
    <dbReference type="NCBI Taxonomy" id="3702"/>
    <lineage>
        <taxon>Eukaryota</taxon>
        <taxon>Viridiplantae</taxon>
        <taxon>Streptophyta</taxon>
        <taxon>Embryophyta</taxon>
        <taxon>Tracheophyta</taxon>
        <taxon>Spermatophyta</taxon>
        <taxon>Magnoliopsida</taxon>
        <taxon>eudicotyledons</taxon>
        <taxon>Gunneridae</taxon>
        <taxon>Pentapetalae</taxon>
        <taxon>rosids</taxon>
        <taxon>malvids</taxon>
        <taxon>Brassicales</taxon>
        <taxon>Brassicaceae</taxon>
        <taxon>Camelineae</taxon>
        <taxon>Arabidopsis</taxon>
    </lineage>
</organism>
<reference key="1">
    <citation type="journal article" date="2000" name="Nature">
        <title>Sequence and analysis of chromosome 1 of the plant Arabidopsis thaliana.</title>
        <authorList>
            <person name="Theologis A."/>
            <person name="Ecker J.R."/>
            <person name="Palm C.J."/>
            <person name="Federspiel N.A."/>
            <person name="Kaul S."/>
            <person name="White O."/>
            <person name="Alonso J."/>
            <person name="Altafi H."/>
            <person name="Araujo R."/>
            <person name="Bowman C.L."/>
            <person name="Brooks S.Y."/>
            <person name="Buehler E."/>
            <person name="Chan A."/>
            <person name="Chao Q."/>
            <person name="Chen H."/>
            <person name="Cheuk R.F."/>
            <person name="Chin C.W."/>
            <person name="Chung M.K."/>
            <person name="Conn L."/>
            <person name="Conway A.B."/>
            <person name="Conway A.R."/>
            <person name="Creasy T.H."/>
            <person name="Dewar K."/>
            <person name="Dunn P."/>
            <person name="Etgu P."/>
            <person name="Feldblyum T.V."/>
            <person name="Feng J.-D."/>
            <person name="Fong B."/>
            <person name="Fujii C.Y."/>
            <person name="Gill J.E."/>
            <person name="Goldsmith A.D."/>
            <person name="Haas B."/>
            <person name="Hansen N.F."/>
            <person name="Hughes B."/>
            <person name="Huizar L."/>
            <person name="Hunter J.L."/>
            <person name="Jenkins J."/>
            <person name="Johnson-Hopson C."/>
            <person name="Khan S."/>
            <person name="Khaykin E."/>
            <person name="Kim C.J."/>
            <person name="Koo H.L."/>
            <person name="Kremenetskaia I."/>
            <person name="Kurtz D.B."/>
            <person name="Kwan A."/>
            <person name="Lam B."/>
            <person name="Langin-Hooper S."/>
            <person name="Lee A."/>
            <person name="Lee J.M."/>
            <person name="Lenz C.A."/>
            <person name="Li J.H."/>
            <person name="Li Y.-P."/>
            <person name="Lin X."/>
            <person name="Liu S.X."/>
            <person name="Liu Z.A."/>
            <person name="Luros J.S."/>
            <person name="Maiti R."/>
            <person name="Marziali A."/>
            <person name="Militscher J."/>
            <person name="Miranda M."/>
            <person name="Nguyen M."/>
            <person name="Nierman W.C."/>
            <person name="Osborne B.I."/>
            <person name="Pai G."/>
            <person name="Peterson J."/>
            <person name="Pham P.K."/>
            <person name="Rizzo M."/>
            <person name="Rooney T."/>
            <person name="Rowley D."/>
            <person name="Sakano H."/>
            <person name="Salzberg S.L."/>
            <person name="Schwartz J.R."/>
            <person name="Shinn P."/>
            <person name="Southwick A.M."/>
            <person name="Sun H."/>
            <person name="Tallon L.J."/>
            <person name="Tambunga G."/>
            <person name="Toriumi M.J."/>
            <person name="Town C.D."/>
            <person name="Utterback T."/>
            <person name="Van Aken S."/>
            <person name="Vaysberg M."/>
            <person name="Vysotskaia V.S."/>
            <person name="Walker M."/>
            <person name="Wu D."/>
            <person name="Yu G."/>
            <person name="Fraser C.M."/>
            <person name="Venter J.C."/>
            <person name="Davis R.W."/>
        </authorList>
    </citation>
    <scope>NUCLEOTIDE SEQUENCE [LARGE SCALE GENOMIC DNA]</scope>
    <source>
        <strain>cv. Columbia</strain>
    </source>
</reference>
<reference key="2">
    <citation type="journal article" date="2017" name="Plant J.">
        <title>Araport11: a complete reannotation of the Arabidopsis thaliana reference genome.</title>
        <authorList>
            <person name="Cheng C.Y."/>
            <person name="Krishnakumar V."/>
            <person name="Chan A.P."/>
            <person name="Thibaud-Nissen F."/>
            <person name="Schobel S."/>
            <person name="Town C.D."/>
        </authorList>
    </citation>
    <scope>GENOME REANNOTATION</scope>
    <source>
        <strain>cv. Columbia</strain>
    </source>
</reference>
<reference key="3">
    <citation type="journal article" date="2002" name="Science">
        <title>Functional annotation of a full-length Arabidopsis cDNA collection.</title>
        <authorList>
            <person name="Seki M."/>
            <person name="Narusaka M."/>
            <person name="Kamiya A."/>
            <person name="Ishida J."/>
            <person name="Satou M."/>
            <person name="Sakurai T."/>
            <person name="Nakajima M."/>
            <person name="Enju A."/>
            <person name="Akiyama K."/>
            <person name="Oono Y."/>
            <person name="Muramatsu M."/>
            <person name="Hayashizaki Y."/>
            <person name="Kawai J."/>
            <person name="Carninci P."/>
            <person name="Itoh M."/>
            <person name="Ishii Y."/>
            <person name="Arakawa T."/>
            <person name="Shibata K."/>
            <person name="Shinagawa A."/>
            <person name="Shinozaki K."/>
        </authorList>
    </citation>
    <scope>NUCLEOTIDE SEQUENCE [LARGE SCALE MRNA]</scope>
    <source>
        <strain>cv. Columbia</strain>
    </source>
</reference>
<reference key="4">
    <citation type="journal article" date="2001" name="J. Biol. Chem.">
        <title>The Arabidopsis thaliana ABC protein superfamily, a complete inventory.</title>
        <authorList>
            <person name="Sanchez-Fernandez R."/>
            <person name="Davies T.G."/>
            <person name="Coleman J.O."/>
            <person name="Rea P.A."/>
        </authorList>
    </citation>
    <scope>GENE FAMILY</scope>
    <scope>NOMENCLATURE</scope>
</reference>
<reference key="5">
    <citation type="journal article" date="2007" name="Plant Physiol.">
        <title>The Arabidopsis DESPERADO/AtWBC11 transporter is required for cutin and wax secretion.</title>
        <authorList>
            <person name="Panikashvili D."/>
            <person name="Savaldi-Goldstein S."/>
            <person name="Mandel T."/>
            <person name="Yifhar T."/>
            <person name="Franke R.B."/>
            <person name="Hoefer R."/>
            <person name="Schreiber L."/>
            <person name="Chory J."/>
            <person name="Aharoni A."/>
        </authorList>
    </citation>
    <scope>INDUCTION BY SALT</scope>
</reference>
<reference key="6">
    <citation type="journal article" date="2008" name="Trends Plant Sci.">
        <title>Plant ABC proteins - a unified nomenclature and updated inventory.</title>
        <authorList>
            <person name="Verrier P.J."/>
            <person name="Bird D."/>
            <person name="Burla B."/>
            <person name="Dassa E."/>
            <person name="Forestier C."/>
            <person name="Geisler M."/>
            <person name="Klein M."/>
            <person name="Kolukisaoglu H.U."/>
            <person name="Lee Y."/>
            <person name="Martinoia E."/>
            <person name="Murphy A."/>
            <person name="Rea P.A."/>
            <person name="Samuels L."/>
            <person name="Schulz B."/>
            <person name="Spalding E.J."/>
            <person name="Yazaki K."/>
            <person name="Theodoulou F.L."/>
        </authorList>
    </citation>
    <scope>GENE FAMILY</scope>
    <scope>NOMENCLATURE</scope>
</reference>
<name>AB13G_ARATH</name>
<dbReference type="EMBL" id="AC024261">
    <property type="protein sequence ID" value="AAG52631.1"/>
    <property type="molecule type" value="Genomic_DNA"/>
</dbReference>
<dbReference type="EMBL" id="CP002684">
    <property type="protein sequence ID" value="AEE32670.1"/>
    <property type="molecule type" value="Genomic_DNA"/>
</dbReference>
<dbReference type="EMBL" id="AK118438">
    <property type="protein sequence ID" value="BAC43047.1"/>
    <property type="molecule type" value="mRNA"/>
</dbReference>
<dbReference type="PIR" id="H96552">
    <property type="entry name" value="H96552"/>
</dbReference>
<dbReference type="RefSeq" id="NP_175557.1">
    <property type="nucleotide sequence ID" value="NM_104024.3"/>
</dbReference>
<dbReference type="SMR" id="Q9C8J8"/>
<dbReference type="BioGRID" id="26796">
    <property type="interactions" value="44"/>
</dbReference>
<dbReference type="FunCoup" id="Q9C8J8">
    <property type="interactions" value="67"/>
</dbReference>
<dbReference type="IntAct" id="Q9C8J8">
    <property type="interactions" value="43"/>
</dbReference>
<dbReference type="STRING" id="3702.Q9C8J8"/>
<dbReference type="TCDB" id="3.A.1.204.24">
    <property type="family name" value="the atp-binding cassette (abc) superfamily"/>
</dbReference>
<dbReference type="iPTMnet" id="Q9C8J8"/>
<dbReference type="PaxDb" id="3702-AT1G51460.1"/>
<dbReference type="ProteomicsDB" id="243295"/>
<dbReference type="EnsemblPlants" id="AT1G51460.1">
    <property type="protein sequence ID" value="AT1G51460.1"/>
    <property type="gene ID" value="AT1G51460"/>
</dbReference>
<dbReference type="GeneID" id="841571"/>
<dbReference type="Gramene" id="AT1G51460.1">
    <property type="protein sequence ID" value="AT1G51460.1"/>
    <property type="gene ID" value="AT1G51460"/>
</dbReference>
<dbReference type="KEGG" id="ath:AT1G51460"/>
<dbReference type="Araport" id="AT1G51460"/>
<dbReference type="TAIR" id="AT1G51460">
    <property type="gene designation" value="ABCG13"/>
</dbReference>
<dbReference type="eggNOG" id="KOG0061">
    <property type="taxonomic scope" value="Eukaryota"/>
</dbReference>
<dbReference type="HOGENOM" id="CLU_000604_57_7_1"/>
<dbReference type="InParanoid" id="Q9C8J8"/>
<dbReference type="OMA" id="MIGVEYD"/>
<dbReference type="OrthoDB" id="66620at2759"/>
<dbReference type="PhylomeDB" id="Q9C8J8"/>
<dbReference type="PRO" id="PR:Q9C8J8"/>
<dbReference type="Proteomes" id="UP000006548">
    <property type="component" value="Chromosome 1"/>
</dbReference>
<dbReference type="ExpressionAtlas" id="Q9C8J8">
    <property type="expression patterns" value="baseline and differential"/>
</dbReference>
<dbReference type="GO" id="GO:0016020">
    <property type="term" value="C:membrane"/>
    <property type="evidence" value="ECO:0007669"/>
    <property type="project" value="UniProtKB-SubCell"/>
</dbReference>
<dbReference type="GO" id="GO:0009506">
    <property type="term" value="C:plasmodesma"/>
    <property type="evidence" value="ECO:0007005"/>
    <property type="project" value="TAIR"/>
</dbReference>
<dbReference type="GO" id="GO:0140359">
    <property type="term" value="F:ABC-type transporter activity"/>
    <property type="evidence" value="ECO:0007669"/>
    <property type="project" value="InterPro"/>
</dbReference>
<dbReference type="GO" id="GO:0005524">
    <property type="term" value="F:ATP binding"/>
    <property type="evidence" value="ECO:0007669"/>
    <property type="project" value="UniProtKB-KW"/>
</dbReference>
<dbReference type="GO" id="GO:0016887">
    <property type="term" value="F:ATP hydrolysis activity"/>
    <property type="evidence" value="ECO:0007669"/>
    <property type="project" value="InterPro"/>
</dbReference>
<dbReference type="GO" id="GO:0080051">
    <property type="term" value="P:cutin transport"/>
    <property type="evidence" value="ECO:0000315"/>
    <property type="project" value="TAIR"/>
</dbReference>
<dbReference type="GO" id="GO:0080172">
    <property type="term" value="P:petal epidermis patterning"/>
    <property type="evidence" value="ECO:0000315"/>
    <property type="project" value="TAIR"/>
</dbReference>
<dbReference type="GO" id="GO:0009651">
    <property type="term" value="P:response to salt stress"/>
    <property type="evidence" value="ECO:0000314"/>
    <property type="project" value="UniProtKB"/>
</dbReference>
<dbReference type="CDD" id="cd03213">
    <property type="entry name" value="ABCG_EPDR"/>
    <property type="match status" value="1"/>
</dbReference>
<dbReference type="FunFam" id="3.40.50.300:FF:000504">
    <property type="entry name" value="ABC transporter G family member 11"/>
    <property type="match status" value="1"/>
</dbReference>
<dbReference type="Gene3D" id="3.40.50.300">
    <property type="entry name" value="P-loop containing nucleotide triphosphate hydrolases"/>
    <property type="match status" value="1"/>
</dbReference>
<dbReference type="InterPro" id="IPR003593">
    <property type="entry name" value="AAA+_ATPase"/>
</dbReference>
<dbReference type="InterPro" id="IPR013525">
    <property type="entry name" value="ABC2_TM"/>
</dbReference>
<dbReference type="InterPro" id="IPR003439">
    <property type="entry name" value="ABC_transporter-like_ATP-bd"/>
</dbReference>
<dbReference type="InterPro" id="IPR017871">
    <property type="entry name" value="ABC_transporter-like_CS"/>
</dbReference>
<dbReference type="InterPro" id="IPR043926">
    <property type="entry name" value="ABCG_dom"/>
</dbReference>
<dbReference type="InterPro" id="IPR027417">
    <property type="entry name" value="P-loop_NTPase"/>
</dbReference>
<dbReference type="InterPro" id="IPR052215">
    <property type="entry name" value="Plant_ABCG"/>
</dbReference>
<dbReference type="PANTHER" id="PTHR48042">
    <property type="entry name" value="ABC TRANSPORTER G FAMILY MEMBER 11"/>
    <property type="match status" value="1"/>
</dbReference>
<dbReference type="PANTHER" id="PTHR48042:SF15">
    <property type="entry name" value="ABC TRANSPORTER G FAMILY MEMBER 13"/>
    <property type="match status" value="1"/>
</dbReference>
<dbReference type="Pfam" id="PF01061">
    <property type="entry name" value="ABC2_membrane"/>
    <property type="match status" value="1"/>
</dbReference>
<dbReference type="Pfam" id="PF19055">
    <property type="entry name" value="ABC2_membrane_7"/>
    <property type="match status" value="1"/>
</dbReference>
<dbReference type="Pfam" id="PF00005">
    <property type="entry name" value="ABC_tran"/>
    <property type="match status" value="1"/>
</dbReference>
<dbReference type="SMART" id="SM00382">
    <property type="entry name" value="AAA"/>
    <property type="match status" value="1"/>
</dbReference>
<dbReference type="SUPFAM" id="SSF52540">
    <property type="entry name" value="P-loop containing nucleoside triphosphate hydrolases"/>
    <property type="match status" value="1"/>
</dbReference>
<dbReference type="PROSITE" id="PS00211">
    <property type="entry name" value="ABC_TRANSPORTER_1"/>
    <property type="match status" value="1"/>
</dbReference>
<dbReference type="PROSITE" id="PS50893">
    <property type="entry name" value="ABC_TRANSPORTER_2"/>
    <property type="match status" value="1"/>
</dbReference>
<evidence type="ECO:0000250" key="1"/>
<evidence type="ECO:0000250" key="2">
    <source>
        <dbReference type="UniProtKB" id="Q8RXN0"/>
    </source>
</evidence>
<evidence type="ECO:0000255" key="3"/>
<evidence type="ECO:0000255" key="4">
    <source>
        <dbReference type="PROSITE-ProRule" id="PRU00434"/>
    </source>
</evidence>
<evidence type="ECO:0000269" key="5">
    <source>
    </source>
</evidence>
<evidence type="ECO:0000305" key="6"/>